<accession>B0JSD7</accession>
<comment type="catalytic activity">
    <reaction evidence="1">
        <text>tRNA(Gly) + glycine + ATP = glycyl-tRNA(Gly) + AMP + diphosphate</text>
        <dbReference type="Rhea" id="RHEA:16013"/>
        <dbReference type="Rhea" id="RHEA-COMP:9664"/>
        <dbReference type="Rhea" id="RHEA-COMP:9683"/>
        <dbReference type="ChEBI" id="CHEBI:30616"/>
        <dbReference type="ChEBI" id="CHEBI:33019"/>
        <dbReference type="ChEBI" id="CHEBI:57305"/>
        <dbReference type="ChEBI" id="CHEBI:78442"/>
        <dbReference type="ChEBI" id="CHEBI:78522"/>
        <dbReference type="ChEBI" id="CHEBI:456215"/>
        <dbReference type="EC" id="6.1.1.14"/>
    </reaction>
</comment>
<comment type="subunit">
    <text evidence="1">Tetramer of two alpha and two beta subunits.</text>
</comment>
<comment type="subcellular location">
    <subcellularLocation>
        <location evidence="1">Cytoplasm</location>
    </subcellularLocation>
</comment>
<comment type="similarity">
    <text evidence="1">Belongs to the class-II aminoacyl-tRNA synthetase family.</text>
</comment>
<protein>
    <recommendedName>
        <fullName evidence="1">Glycine--tRNA ligase alpha subunit</fullName>
        <ecNumber evidence="1">6.1.1.14</ecNumber>
    </recommendedName>
    <alternativeName>
        <fullName evidence="1">Glycyl-tRNA synthetase alpha subunit</fullName>
        <shortName evidence="1">GlyRS</shortName>
    </alternativeName>
</protein>
<proteinExistence type="inferred from homology"/>
<evidence type="ECO:0000255" key="1">
    <source>
        <dbReference type="HAMAP-Rule" id="MF_00254"/>
    </source>
</evidence>
<gene>
    <name evidence="1" type="primary">glyQ</name>
    <name type="ordered locus">MAE_42730</name>
</gene>
<keyword id="KW-0030">Aminoacyl-tRNA synthetase</keyword>
<keyword id="KW-0067">ATP-binding</keyword>
<keyword id="KW-0963">Cytoplasm</keyword>
<keyword id="KW-0436">Ligase</keyword>
<keyword id="KW-0547">Nucleotide-binding</keyword>
<keyword id="KW-0648">Protein biosynthesis</keyword>
<sequence>MSLTFQAVIAKLNEFWADRGCLVAQPYDTEKGAGTMSPHTFLRAIGPEPWAVAYVEPCRRPTDGRYGENPNRFQHYYQYQVLIKPSPDNIQEIYLDSLRVLGINPEDHDIRFVEDNWESPTLGAWGVGWEVWLDGMEITQFTYFQQCGGIDCRPVAIEITYGLERLAMYLQDVEAINKIQWNENILYGDIFLQNEIEQCTYNFEASNPELLFSLFSLYEQEAKQLIDRSLVIPSLDYVLKCSHTFNLLDARGVIAVAERTRYIGRIRNLARQVAQLYLQQREALGFPLQTV</sequence>
<organism>
    <name type="scientific">Microcystis aeruginosa (strain NIES-843 / IAM M-2473)</name>
    <dbReference type="NCBI Taxonomy" id="449447"/>
    <lineage>
        <taxon>Bacteria</taxon>
        <taxon>Bacillati</taxon>
        <taxon>Cyanobacteriota</taxon>
        <taxon>Cyanophyceae</taxon>
        <taxon>Oscillatoriophycideae</taxon>
        <taxon>Chroococcales</taxon>
        <taxon>Microcystaceae</taxon>
        <taxon>Microcystis</taxon>
    </lineage>
</organism>
<feature type="chain" id="PRO_1000078528" description="Glycine--tRNA ligase alpha subunit">
    <location>
        <begin position="1"/>
        <end position="291"/>
    </location>
</feature>
<dbReference type="EC" id="6.1.1.14" evidence="1"/>
<dbReference type="EMBL" id="AP009552">
    <property type="protein sequence ID" value="BAG04095.1"/>
    <property type="molecule type" value="Genomic_DNA"/>
</dbReference>
<dbReference type="RefSeq" id="WP_004162850.1">
    <property type="nucleotide sequence ID" value="NC_010296.1"/>
</dbReference>
<dbReference type="SMR" id="B0JSD7"/>
<dbReference type="STRING" id="449447.MAE_42730"/>
<dbReference type="PaxDb" id="449447-MAE_42730"/>
<dbReference type="EnsemblBacteria" id="BAG04095">
    <property type="protein sequence ID" value="BAG04095"/>
    <property type="gene ID" value="MAE_42730"/>
</dbReference>
<dbReference type="GeneID" id="66707199"/>
<dbReference type="KEGG" id="mar:MAE_42730"/>
<dbReference type="eggNOG" id="COG0752">
    <property type="taxonomic scope" value="Bacteria"/>
</dbReference>
<dbReference type="HOGENOM" id="CLU_057066_1_0_3"/>
<dbReference type="BioCyc" id="MAER449447:MAE_RS18540-MONOMER"/>
<dbReference type="Proteomes" id="UP000001510">
    <property type="component" value="Chromosome"/>
</dbReference>
<dbReference type="GO" id="GO:0005829">
    <property type="term" value="C:cytosol"/>
    <property type="evidence" value="ECO:0007669"/>
    <property type="project" value="TreeGrafter"/>
</dbReference>
<dbReference type="GO" id="GO:0005524">
    <property type="term" value="F:ATP binding"/>
    <property type="evidence" value="ECO:0007669"/>
    <property type="project" value="UniProtKB-UniRule"/>
</dbReference>
<dbReference type="GO" id="GO:0004820">
    <property type="term" value="F:glycine-tRNA ligase activity"/>
    <property type="evidence" value="ECO:0007669"/>
    <property type="project" value="UniProtKB-UniRule"/>
</dbReference>
<dbReference type="GO" id="GO:0006426">
    <property type="term" value="P:glycyl-tRNA aminoacylation"/>
    <property type="evidence" value="ECO:0007669"/>
    <property type="project" value="UniProtKB-UniRule"/>
</dbReference>
<dbReference type="CDD" id="cd00733">
    <property type="entry name" value="GlyRS_alpha_core"/>
    <property type="match status" value="1"/>
</dbReference>
<dbReference type="FunFam" id="3.30.930.10:FF:000006">
    <property type="entry name" value="Glycine--tRNA ligase alpha subunit"/>
    <property type="match status" value="1"/>
</dbReference>
<dbReference type="Gene3D" id="3.30.930.10">
    <property type="entry name" value="Bira Bifunctional Protein, Domain 2"/>
    <property type="match status" value="1"/>
</dbReference>
<dbReference type="Gene3D" id="1.20.58.180">
    <property type="entry name" value="Class II aaRS and biotin synthetases, domain 2"/>
    <property type="match status" value="1"/>
</dbReference>
<dbReference type="HAMAP" id="MF_00254">
    <property type="entry name" value="Gly_tRNA_synth_alpha"/>
    <property type="match status" value="1"/>
</dbReference>
<dbReference type="InterPro" id="IPR045864">
    <property type="entry name" value="aa-tRNA-synth_II/BPL/LPL"/>
</dbReference>
<dbReference type="InterPro" id="IPR006194">
    <property type="entry name" value="Gly-tRNA-synth_heterodimer"/>
</dbReference>
<dbReference type="InterPro" id="IPR002310">
    <property type="entry name" value="Gly-tRNA_ligase_asu"/>
</dbReference>
<dbReference type="NCBIfam" id="TIGR00388">
    <property type="entry name" value="glyQ"/>
    <property type="match status" value="1"/>
</dbReference>
<dbReference type="NCBIfam" id="NF006827">
    <property type="entry name" value="PRK09348.1"/>
    <property type="match status" value="1"/>
</dbReference>
<dbReference type="PANTHER" id="PTHR30075:SF2">
    <property type="entry name" value="GLYCINE--TRNA LIGASE, CHLOROPLASTIC_MITOCHONDRIAL 2"/>
    <property type="match status" value="1"/>
</dbReference>
<dbReference type="PANTHER" id="PTHR30075">
    <property type="entry name" value="GLYCYL-TRNA SYNTHETASE"/>
    <property type="match status" value="1"/>
</dbReference>
<dbReference type="Pfam" id="PF02091">
    <property type="entry name" value="tRNA-synt_2e"/>
    <property type="match status" value="1"/>
</dbReference>
<dbReference type="PRINTS" id="PR01044">
    <property type="entry name" value="TRNASYNTHGA"/>
</dbReference>
<dbReference type="SUPFAM" id="SSF55681">
    <property type="entry name" value="Class II aaRS and biotin synthetases"/>
    <property type="match status" value="1"/>
</dbReference>
<dbReference type="PROSITE" id="PS50861">
    <property type="entry name" value="AA_TRNA_LIGASE_II_GLYAB"/>
    <property type="match status" value="1"/>
</dbReference>
<reference key="1">
    <citation type="journal article" date="2007" name="DNA Res.">
        <title>Complete genomic structure of the bloom-forming toxic cyanobacterium Microcystis aeruginosa NIES-843.</title>
        <authorList>
            <person name="Kaneko T."/>
            <person name="Nakajima N."/>
            <person name="Okamoto S."/>
            <person name="Suzuki I."/>
            <person name="Tanabe Y."/>
            <person name="Tamaoki M."/>
            <person name="Nakamura Y."/>
            <person name="Kasai F."/>
            <person name="Watanabe A."/>
            <person name="Kawashima K."/>
            <person name="Kishida Y."/>
            <person name="Ono A."/>
            <person name="Shimizu Y."/>
            <person name="Takahashi C."/>
            <person name="Minami C."/>
            <person name="Fujishiro T."/>
            <person name="Kohara M."/>
            <person name="Katoh M."/>
            <person name="Nakazaki N."/>
            <person name="Nakayama S."/>
            <person name="Yamada M."/>
            <person name="Tabata S."/>
            <person name="Watanabe M.M."/>
        </authorList>
    </citation>
    <scope>NUCLEOTIDE SEQUENCE [LARGE SCALE GENOMIC DNA]</scope>
    <source>
        <strain>NIES-843 / IAM M-247</strain>
    </source>
</reference>
<name>SYGA_MICAN</name>